<keyword id="KW-1185">Reference proteome</keyword>
<sequence length="295" mass="34069">MQRQRANDTVTTFRYNTRSSSRHGISNTLRVVESKTSASSPRVRRWRKKVSDDRRSTNSDLLPMDLIKEILKRLPAKTLARFLCVSKLWSSIIRSRDLMKLFLTESSARPGRLFFTFRRKDDCFLFSSEESSVATYLFTIPASGYTNNCSFVHGLICYGTTAYASQLVVYNSSTRRSITLPEIEARSFVLKHLLGYDPIDGVYKVLCMTVPRLVLQKKKKLRNNVTDAGELILAPISLPDPPYYVIYYDPQRQSTRKVVIRGITEHNCKLLRCKKRHPCILYYVFSSQVESLMFM</sequence>
<proteinExistence type="predicted"/>
<organism>
    <name type="scientific">Arabidopsis thaliana</name>
    <name type="common">Mouse-ear cress</name>
    <dbReference type="NCBI Taxonomy" id="3702"/>
    <lineage>
        <taxon>Eukaryota</taxon>
        <taxon>Viridiplantae</taxon>
        <taxon>Streptophyta</taxon>
        <taxon>Embryophyta</taxon>
        <taxon>Tracheophyta</taxon>
        <taxon>Spermatophyta</taxon>
        <taxon>Magnoliopsida</taxon>
        <taxon>eudicotyledons</taxon>
        <taxon>Gunneridae</taxon>
        <taxon>Pentapetalae</taxon>
        <taxon>rosids</taxon>
        <taxon>malvids</taxon>
        <taxon>Brassicales</taxon>
        <taxon>Brassicaceae</taxon>
        <taxon>Camelineae</taxon>
        <taxon>Arabidopsis</taxon>
    </lineage>
</organism>
<dbReference type="EMBL" id="AB005239">
    <property type="protein sequence ID" value="BAB10989.1"/>
    <property type="molecule type" value="Genomic_DNA"/>
</dbReference>
<dbReference type="EMBL" id="CP002688">
    <property type="protein sequence ID" value="AED95076.1"/>
    <property type="molecule type" value="Genomic_DNA"/>
</dbReference>
<dbReference type="RefSeq" id="NP_199235.1">
    <property type="nucleotide sequence ID" value="NM_123789.1"/>
</dbReference>
<dbReference type="BioGRID" id="19695">
    <property type="interactions" value="1"/>
</dbReference>
<dbReference type="FunCoup" id="Q9FFG9">
    <property type="interactions" value="19"/>
</dbReference>
<dbReference type="PaxDb" id="3702-AT5G44220.1"/>
<dbReference type="EnsemblPlants" id="AT5G44220.1">
    <property type="protein sequence ID" value="AT5G44220.1"/>
    <property type="gene ID" value="AT5G44220"/>
</dbReference>
<dbReference type="GeneID" id="834445"/>
<dbReference type="Gramene" id="AT5G44220.1">
    <property type="protein sequence ID" value="AT5G44220.1"/>
    <property type="gene ID" value="AT5G44220"/>
</dbReference>
<dbReference type="KEGG" id="ath:AT5G44220"/>
<dbReference type="Araport" id="AT5G44220"/>
<dbReference type="TAIR" id="AT5G44220"/>
<dbReference type="HOGENOM" id="CLU_951088_0_0_1"/>
<dbReference type="InParanoid" id="Q9FFG9"/>
<dbReference type="PhylomeDB" id="Q9FFG9"/>
<dbReference type="PRO" id="PR:Q9FFG9"/>
<dbReference type="Proteomes" id="UP000006548">
    <property type="component" value="Chromosome 5"/>
</dbReference>
<dbReference type="ExpressionAtlas" id="Q9FFG9">
    <property type="expression patterns" value="baseline and differential"/>
</dbReference>
<dbReference type="Gene3D" id="1.20.1280.50">
    <property type="match status" value="1"/>
</dbReference>
<dbReference type="InterPro" id="IPR017451">
    <property type="entry name" value="F-box-assoc_interact_dom"/>
</dbReference>
<dbReference type="InterPro" id="IPR036047">
    <property type="entry name" value="F-box-like_dom_sf"/>
</dbReference>
<dbReference type="InterPro" id="IPR001810">
    <property type="entry name" value="F-box_dom"/>
</dbReference>
<dbReference type="NCBIfam" id="TIGR01640">
    <property type="entry name" value="F_box_assoc_1"/>
    <property type="match status" value="1"/>
</dbReference>
<dbReference type="PANTHER" id="PTHR31111">
    <property type="entry name" value="BNAA05G37150D PROTEIN-RELATED"/>
    <property type="match status" value="1"/>
</dbReference>
<dbReference type="PANTHER" id="PTHR31111:SF106">
    <property type="entry name" value="F-BOX ASSOCIATED UBIQUITINATION EFFECTOR FAMILY PROTEIN"/>
    <property type="match status" value="1"/>
</dbReference>
<dbReference type="Pfam" id="PF00646">
    <property type="entry name" value="F-box"/>
    <property type="match status" value="1"/>
</dbReference>
<dbReference type="SMART" id="SM00256">
    <property type="entry name" value="FBOX"/>
    <property type="match status" value="1"/>
</dbReference>
<dbReference type="SUPFAM" id="SSF81383">
    <property type="entry name" value="F-box domain"/>
    <property type="match status" value="1"/>
</dbReference>
<dbReference type="PROSITE" id="PS50181">
    <property type="entry name" value="FBOX"/>
    <property type="match status" value="1"/>
</dbReference>
<feature type="chain" id="PRO_0000283548" description="Putative F-box protein At5g44220">
    <location>
        <begin position="1"/>
        <end position="295"/>
    </location>
</feature>
<feature type="domain" description="F-box" evidence="1">
    <location>
        <begin position="56"/>
        <end position="102"/>
    </location>
</feature>
<reference key="1">
    <citation type="journal article" date="1997" name="DNA Res.">
        <title>Structural analysis of Arabidopsis thaliana chromosome 5. I. Sequence features of the 1.6 Mb regions covered by twenty physically assigned P1 clones.</title>
        <authorList>
            <person name="Sato S."/>
            <person name="Kotani H."/>
            <person name="Nakamura Y."/>
            <person name="Kaneko T."/>
            <person name="Asamizu E."/>
            <person name="Fukami M."/>
            <person name="Miyajima N."/>
            <person name="Tabata S."/>
        </authorList>
    </citation>
    <scope>NUCLEOTIDE SEQUENCE [LARGE SCALE GENOMIC DNA]</scope>
    <source>
        <strain>cv. Columbia</strain>
    </source>
</reference>
<reference key="2">
    <citation type="journal article" date="2017" name="Plant J.">
        <title>Araport11: a complete reannotation of the Arabidopsis thaliana reference genome.</title>
        <authorList>
            <person name="Cheng C.Y."/>
            <person name="Krishnakumar V."/>
            <person name="Chan A.P."/>
            <person name="Thibaud-Nissen F."/>
            <person name="Schobel S."/>
            <person name="Town C.D."/>
        </authorList>
    </citation>
    <scope>GENOME REANNOTATION</scope>
    <source>
        <strain>cv. Columbia</strain>
    </source>
</reference>
<gene>
    <name type="ordered locus">At5g44220</name>
    <name type="ORF">MLN1.15</name>
</gene>
<protein>
    <recommendedName>
        <fullName>Putative F-box protein At5g44220</fullName>
    </recommendedName>
</protein>
<evidence type="ECO:0000255" key="1">
    <source>
        <dbReference type="PROSITE-ProRule" id="PRU00080"/>
    </source>
</evidence>
<accession>Q9FFG9</accession>
<name>FB282_ARATH</name>